<evidence type="ECO:0000250" key="1">
    <source>
        <dbReference type="UniProtKB" id="Q9UGJ1"/>
    </source>
</evidence>
<evidence type="ECO:0000256" key="2">
    <source>
        <dbReference type="SAM" id="MobiDB-lite"/>
    </source>
</evidence>
<evidence type="ECO:0000305" key="3"/>
<sequence length="667" mass="76126">MIHELLLALSGYPGSIFTWNKRSGLQVSQDFPFLHPSETSVLNRLCRLGTDYIRFTEFIEQYTGHVQQQDHHPPQQGQGGLHGIYLRAFCTGLDSVLQPYRQALLDLEQEFLADPHLSISHVNYSLDQFQLLFPSVMVVVEQIKSQKIHGCQILETVYKHSCGGLPPVRSALEKILAVCHGVMYKQLSAWMLHGLLLDQHEEFFIKQGPSSGTLSAQLEEDEEDLGIGGLTGKQLRELQDLRLIEEENMLAPSLKQFSLRVEILPSYIPVRVAEKILFVGESVQMFENQNVNLTRKGSILKNQEDTFAAELHRLKQQPLFSLVDFEQVVDRIRSTVAEHLWKLMVEESDLLGQLKIIKDFYLLGRGELFQAFIDTAQHMLKTPPTAVTEHDVNVAFQQSAHKVLLDDDNLLPLLHLTIEYHGKDHKADATQPREVPSRETSPREAPSSGWAALGLSYKVQWPLHILFTPAVLEKYNVVFKYLLSVRRVQAELQHCWALQMQRKHLKSNQTDAVKWRLRNHMAFLVDNLQYYLQVDVLESQFSQLLHQINSTRDFESIRLAHDHFLSNLLAQSFILLKPVFHCLNEILDLCHSFCSLVSQNLGPLDERGAAQLSILVKGFSRQSSLLFKILSSVRNHQINSDLAQLLLRLDYNKYYTQAGGTLGSFGM</sequence>
<keyword id="KW-0963">Cytoplasm</keyword>
<keyword id="KW-0206">Cytoskeleton</keyword>
<keyword id="KW-0493">Microtubule</keyword>
<keyword id="KW-1185">Reference proteome</keyword>
<feature type="chain" id="PRO_0000078125" description="Gamma-tubulin complex component 4">
    <location>
        <begin position="1"/>
        <end position="667"/>
    </location>
</feature>
<feature type="region of interest" description="Disordered" evidence="2">
    <location>
        <begin position="424"/>
        <end position="446"/>
    </location>
</feature>
<comment type="function">
    <text evidence="1">Component of the gamma-tubulin ring complex (gTuRC) which mediates microtubule nucleation (By similarity). The gTuRC regulates the minus-end nucleation of alpha-beta tubulin heterodimers that grow into microtubule protafilaments, a critical step in centrosome duplication and spindle formation (By similarity).</text>
</comment>
<comment type="subunit">
    <text evidence="1">Component of the gamma-tubulin ring complex (gTuRC) consisting of TUBGCP2, TUBGCP3, TUBGCP4, TUBGCP5 and TUBGCP6 and gamma-tubulin TUBG1 or TUBG2 (By similarity). TUBGCP2, TUBGCP3, TUBGCP4, TUBGCP5 and TUBGCP6 assemble in a 5:5:2:1:1 stoichiometry; each is associated with a gamma-tubulin, thereby arranging 14 gamma-tubulins in a helical manner (By similarity). Gamma-tubulin at the first position is blocked by TUBGCP3 at the last position, allowing 13 protafilaments to grow into a microtubule (By similarity). The gTuRC (via TUBGCP3 and TUBGCP6) interacts with ACTB and MZT1; the interactions form a luminal bridge that stabilizes the initial structure during complex assembly (By similarity). The gTuRC (via TUBGCP2) interacts with MZT2A/MZT2B and CDK5RAP2 (via CM1 motif); the interactions play a role in gTuRC activation (By similarity). Interacts with NINL (By similarity). Interacts with ATF5; the ATF5:PCNT:polyglutamylated tubulin (PGT) tripartite unites the mother centriole and the pericentriolar material (PCM) in the centrosome (By similarity).</text>
</comment>
<comment type="subcellular location">
    <subcellularLocation>
        <location evidence="1">Cytoplasm</location>
        <location evidence="1">Cytoskeleton</location>
        <location evidence="1">Microtubule organizing center</location>
        <location evidence="1">Centrosome</location>
    </subcellularLocation>
</comment>
<comment type="similarity">
    <text evidence="3">Belongs to the TUBGCP family.</text>
</comment>
<proteinExistence type="evidence at protein level"/>
<reference key="1">
    <citation type="journal article" date="2004" name="Genome Res.">
        <title>The status, quality, and expansion of the NIH full-length cDNA project: the Mammalian Gene Collection (MGC).</title>
        <authorList>
            <consortium name="The MGC Project Team"/>
        </authorList>
    </citation>
    <scope>NUCLEOTIDE SEQUENCE [LARGE SCALE MRNA]</scope>
    <source>
        <strain>FVB/N</strain>
        <tissue>Mammary gland</tissue>
    </source>
</reference>
<reference key="2">
    <citation type="journal article" date="2005" name="Science">
        <title>The transcriptional landscape of the mammalian genome.</title>
        <authorList>
            <person name="Carninci P."/>
            <person name="Kasukawa T."/>
            <person name="Katayama S."/>
            <person name="Gough J."/>
            <person name="Frith M.C."/>
            <person name="Maeda N."/>
            <person name="Oyama R."/>
            <person name="Ravasi T."/>
            <person name="Lenhard B."/>
            <person name="Wells C."/>
            <person name="Kodzius R."/>
            <person name="Shimokawa K."/>
            <person name="Bajic V.B."/>
            <person name="Brenner S.E."/>
            <person name="Batalov S."/>
            <person name="Forrest A.R."/>
            <person name="Zavolan M."/>
            <person name="Davis M.J."/>
            <person name="Wilming L.G."/>
            <person name="Aidinis V."/>
            <person name="Allen J.E."/>
            <person name="Ambesi-Impiombato A."/>
            <person name="Apweiler R."/>
            <person name="Aturaliya R.N."/>
            <person name="Bailey T.L."/>
            <person name="Bansal M."/>
            <person name="Baxter L."/>
            <person name="Beisel K.W."/>
            <person name="Bersano T."/>
            <person name="Bono H."/>
            <person name="Chalk A.M."/>
            <person name="Chiu K.P."/>
            <person name="Choudhary V."/>
            <person name="Christoffels A."/>
            <person name="Clutterbuck D.R."/>
            <person name="Crowe M.L."/>
            <person name="Dalla E."/>
            <person name="Dalrymple B.P."/>
            <person name="de Bono B."/>
            <person name="Della Gatta G."/>
            <person name="di Bernardo D."/>
            <person name="Down T."/>
            <person name="Engstrom P."/>
            <person name="Fagiolini M."/>
            <person name="Faulkner G."/>
            <person name="Fletcher C.F."/>
            <person name="Fukushima T."/>
            <person name="Furuno M."/>
            <person name="Futaki S."/>
            <person name="Gariboldi M."/>
            <person name="Georgii-Hemming P."/>
            <person name="Gingeras T.R."/>
            <person name="Gojobori T."/>
            <person name="Green R.E."/>
            <person name="Gustincich S."/>
            <person name="Harbers M."/>
            <person name="Hayashi Y."/>
            <person name="Hensch T.K."/>
            <person name="Hirokawa N."/>
            <person name="Hill D."/>
            <person name="Huminiecki L."/>
            <person name="Iacono M."/>
            <person name="Ikeo K."/>
            <person name="Iwama A."/>
            <person name="Ishikawa T."/>
            <person name="Jakt M."/>
            <person name="Kanapin A."/>
            <person name="Katoh M."/>
            <person name="Kawasawa Y."/>
            <person name="Kelso J."/>
            <person name="Kitamura H."/>
            <person name="Kitano H."/>
            <person name="Kollias G."/>
            <person name="Krishnan S.P."/>
            <person name="Kruger A."/>
            <person name="Kummerfeld S.K."/>
            <person name="Kurochkin I.V."/>
            <person name="Lareau L.F."/>
            <person name="Lazarevic D."/>
            <person name="Lipovich L."/>
            <person name="Liu J."/>
            <person name="Liuni S."/>
            <person name="McWilliam S."/>
            <person name="Madan Babu M."/>
            <person name="Madera M."/>
            <person name="Marchionni L."/>
            <person name="Matsuda H."/>
            <person name="Matsuzawa S."/>
            <person name="Miki H."/>
            <person name="Mignone F."/>
            <person name="Miyake S."/>
            <person name="Morris K."/>
            <person name="Mottagui-Tabar S."/>
            <person name="Mulder N."/>
            <person name="Nakano N."/>
            <person name="Nakauchi H."/>
            <person name="Ng P."/>
            <person name="Nilsson R."/>
            <person name="Nishiguchi S."/>
            <person name="Nishikawa S."/>
            <person name="Nori F."/>
            <person name="Ohara O."/>
            <person name="Okazaki Y."/>
            <person name="Orlando V."/>
            <person name="Pang K.C."/>
            <person name="Pavan W.J."/>
            <person name="Pavesi G."/>
            <person name="Pesole G."/>
            <person name="Petrovsky N."/>
            <person name="Piazza S."/>
            <person name="Reed J."/>
            <person name="Reid J.F."/>
            <person name="Ring B.Z."/>
            <person name="Ringwald M."/>
            <person name="Rost B."/>
            <person name="Ruan Y."/>
            <person name="Salzberg S.L."/>
            <person name="Sandelin A."/>
            <person name="Schneider C."/>
            <person name="Schoenbach C."/>
            <person name="Sekiguchi K."/>
            <person name="Semple C.A."/>
            <person name="Seno S."/>
            <person name="Sessa L."/>
            <person name="Sheng Y."/>
            <person name="Shibata Y."/>
            <person name="Shimada H."/>
            <person name="Shimada K."/>
            <person name="Silva D."/>
            <person name="Sinclair B."/>
            <person name="Sperling S."/>
            <person name="Stupka E."/>
            <person name="Sugiura K."/>
            <person name="Sultana R."/>
            <person name="Takenaka Y."/>
            <person name="Taki K."/>
            <person name="Tammoja K."/>
            <person name="Tan S.L."/>
            <person name="Tang S."/>
            <person name="Taylor M.S."/>
            <person name="Tegner J."/>
            <person name="Teichmann S.A."/>
            <person name="Ueda H.R."/>
            <person name="van Nimwegen E."/>
            <person name="Verardo R."/>
            <person name="Wei C.L."/>
            <person name="Yagi K."/>
            <person name="Yamanishi H."/>
            <person name="Zabarovsky E."/>
            <person name="Zhu S."/>
            <person name="Zimmer A."/>
            <person name="Hide W."/>
            <person name="Bult C."/>
            <person name="Grimmond S.M."/>
            <person name="Teasdale R.D."/>
            <person name="Liu E.T."/>
            <person name="Brusic V."/>
            <person name="Quackenbush J."/>
            <person name="Wahlestedt C."/>
            <person name="Mattick J.S."/>
            <person name="Hume D.A."/>
            <person name="Kai C."/>
            <person name="Sasaki D."/>
            <person name="Tomaru Y."/>
            <person name="Fukuda S."/>
            <person name="Kanamori-Katayama M."/>
            <person name="Suzuki M."/>
            <person name="Aoki J."/>
            <person name="Arakawa T."/>
            <person name="Iida J."/>
            <person name="Imamura K."/>
            <person name="Itoh M."/>
            <person name="Kato T."/>
            <person name="Kawaji H."/>
            <person name="Kawagashira N."/>
            <person name="Kawashima T."/>
            <person name="Kojima M."/>
            <person name="Kondo S."/>
            <person name="Konno H."/>
            <person name="Nakano K."/>
            <person name="Ninomiya N."/>
            <person name="Nishio T."/>
            <person name="Okada M."/>
            <person name="Plessy C."/>
            <person name="Shibata K."/>
            <person name="Shiraki T."/>
            <person name="Suzuki S."/>
            <person name="Tagami M."/>
            <person name="Waki K."/>
            <person name="Watahiki A."/>
            <person name="Okamura-Oho Y."/>
            <person name="Suzuki H."/>
            <person name="Kawai J."/>
            <person name="Hayashizaki Y."/>
        </authorList>
    </citation>
    <scope>NUCLEOTIDE SEQUENCE [LARGE SCALE MRNA] OF 26-338</scope>
    <source>
        <strain>C57BL/6J</strain>
        <tissue>Testis</tissue>
    </source>
</reference>
<reference key="3">
    <citation type="journal article" date="2010" name="Cell">
        <title>A tissue-specific atlas of mouse protein phosphorylation and expression.</title>
        <authorList>
            <person name="Huttlin E.L."/>
            <person name="Jedrychowski M.P."/>
            <person name="Elias J.E."/>
            <person name="Goswami T."/>
            <person name="Rad R."/>
            <person name="Beausoleil S.A."/>
            <person name="Villen J."/>
            <person name="Haas W."/>
            <person name="Sowa M.E."/>
            <person name="Gygi S.P."/>
        </authorList>
    </citation>
    <scope>IDENTIFICATION BY MASS SPECTROMETRY [LARGE SCALE ANALYSIS]</scope>
    <source>
        <tissue>Spleen</tissue>
    </source>
</reference>
<gene>
    <name type="primary">Tubgcp4</name>
    <name type="synonym">D2Ertd435e</name>
    <name type="synonym">Gcp4</name>
</gene>
<protein>
    <recommendedName>
        <fullName>Gamma-tubulin complex component 4</fullName>
        <shortName>GCP-4</shortName>
    </recommendedName>
</protein>
<organism>
    <name type="scientific">Mus musculus</name>
    <name type="common">Mouse</name>
    <dbReference type="NCBI Taxonomy" id="10090"/>
    <lineage>
        <taxon>Eukaryota</taxon>
        <taxon>Metazoa</taxon>
        <taxon>Chordata</taxon>
        <taxon>Craniata</taxon>
        <taxon>Vertebrata</taxon>
        <taxon>Euteleostomi</taxon>
        <taxon>Mammalia</taxon>
        <taxon>Eutheria</taxon>
        <taxon>Euarchontoglires</taxon>
        <taxon>Glires</taxon>
        <taxon>Rodentia</taxon>
        <taxon>Myomorpha</taxon>
        <taxon>Muroidea</taxon>
        <taxon>Muridae</taxon>
        <taxon>Murinae</taxon>
        <taxon>Mus</taxon>
        <taxon>Mus</taxon>
    </lineage>
</organism>
<dbReference type="EMBL" id="BC029106">
    <property type="protein sequence ID" value="AAH29106.1"/>
    <property type="molecule type" value="mRNA"/>
</dbReference>
<dbReference type="EMBL" id="AK016563">
    <property type="status" value="NOT_ANNOTATED_CDS"/>
    <property type="molecule type" value="mRNA"/>
</dbReference>
<dbReference type="CCDS" id="CCDS16637.1"/>
<dbReference type="RefSeq" id="NP_700436.1">
    <property type="nucleotide sequence ID" value="NM_153387.4"/>
</dbReference>
<dbReference type="SMR" id="Q9D4F8"/>
<dbReference type="BioGRID" id="206244">
    <property type="interactions" value="29"/>
</dbReference>
<dbReference type="FunCoup" id="Q9D4F8">
    <property type="interactions" value="2535"/>
</dbReference>
<dbReference type="IntAct" id="Q9D4F8">
    <property type="interactions" value="9"/>
</dbReference>
<dbReference type="MINT" id="Q9D4F8"/>
<dbReference type="STRING" id="10090.ENSMUSP00000044049"/>
<dbReference type="GlyGen" id="Q9D4F8">
    <property type="glycosylation" value="1 site, 1 N-linked glycan (1 site)"/>
</dbReference>
<dbReference type="PhosphoSitePlus" id="Q9D4F8"/>
<dbReference type="PaxDb" id="10090-ENSMUSP00000044049"/>
<dbReference type="ProteomicsDB" id="271196"/>
<dbReference type="Pumba" id="Q9D4F8"/>
<dbReference type="Antibodypedia" id="23879">
    <property type="antibodies" value="218 antibodies from 28 providers"/>
</dbReference>
<dbReference type="DNASU" id="51885"/>
<dbReference type="Ensembl" id="ENSMUST00000039541.12">
    <property type="protein sequence ID" value="ENSMUSP00000044049.6"/>
    <property type="gene ID" value="ENSMUSG00000027263.13"/>
</dbReference>
<dbReference type="GeneID" id="51885"/>
<dbReference type="KEGG" id="mmu:51885"/>
<dbReference type="UCSC" id="uc008lxv.2">
    <property type="organism name" value="mouse"/>
</dbReference>
<dbReference type="AGR" id="MGI:1196293"/>
<dbReference type="CTD" id="27229"/>
<dbReference type="MGI" id="MGI:1196293">
    <property type="gene designation" value="Tubgcp4"/>
</dbReference>
<dbReference type="VEuPathDB" id="HostDB:ENSMUSG00000027263"/>
<dbReference type="eggNOG" id="KOG2065">
    <property type="taxonomic scope" value="Eukaryota"/>
</dbReference>
<dbReference type="GeneTree" id="ENSGT00940000156677"/>
<dbReference type="InParanoid" id="Q9D4F8"/>
<dbReference type="OMA" id="QLSMWLL"/>
<dbReference type="OrthoDB" id="78652at2759"/>
<dbReference type="PhylomeDB" id="Q9D4F8"/>
<dbReference type="TreeFam" id="TF324188"/>
<dbReference type="Reactome" id="R-MMU-380270">
    <property type="pathway name" value="Recruitment of mitotic centrosome proteins and complexes"/>
</dbReference>
<dbReference type="Reactome" id="R-MMU-380320">
    <property type="pathway name" value="Recruitment of NuMA to mitotic centrosomes"/>
</dbReference>
<dbReference type="BioGRID-ORCS" id="51885">
    <property type="hits" value="20 hits in 78 CRISPR screens"/>
</dbReference>
<dbReference type="CD-CODE" id="01CA17F3">
    <property type="entry name" value="Centrosome"/>
</dbReference>
<dbReference type="ChiTaRS" id="Tubgcp4">
    <property type="organism name" value="mouse"/>
</dbReference>
<dbReference type="PRO" id="PR:Q9D4F8"/>
<dbReference type="Proteomes" id="UP000000589">
    <property type="component" value="Chromosome 2"/>
</dbReference>
<dbReference type="RNAct" id="Q9D4F8">
    <property type="molecule type" value="protein"/>
</dbReference>
<dbReference type="Bgee" id="ENSMUSG00000027263">
    <property type="expression patterns" value="Expressed in floor plate of midbrain and 267 other cell types or tissues"/>
</dbReference>
<dbReference type="ExpressionAtlas" id="Q9D4F8">
    <property type="expression patterns" value="baseline and differential"/>
</dbReference>
<dbReference type="GO" id="GO:0005813">
    <property type="term" value="C:centrosome"/>
    <property type="evidence" value="ECO:0007669"/>
    <property type="project" value="UniProtKB-SubCell"/>
</dbReference>
<dbReference type="GO" id="GO:0005874">
    <property type="term" value="C:microtubule"/>
    <property type="evidence" value="ECO:0007669"/>
    <property type="project" value="UniProtKB-KW"/>
</dbReference>
<dbReference type="GO" id="GO:0055037">
    <property type="term" value="C:recycling endosome"/>
    <property type="evidence" value="ECO:0007669"/>
    <property type="project" value="Ensembl"/>
</dbReference>
<dbReference type="GO" id="GO:0000922">
    <property type="term" value="C:spindle pole"/>
    <property type="evidence" value="ECO:0007669"/>
    <property type="project" value="InterPro"/>
</dbReference>
<dbReference type="GO" id="GO:0043015">
    <property type="term" value="F:gamma-tubulin binding"/>
    <property type="evidence" value="ECO:0007669"/>
    <property type="project" value="InterPro"/>
</dbReference>
<dbReference type="GO" id="GO:0007020">
    <property type="term" value="P:microtubule nucleation"/>
    <property type="evidence" value="ECO:0007669"/>
    <property type="project" value="InterPro"/>
</dbReference>
<dbReference type="FunFam" id="1.20.120.1900:FF:000001">
    <property type="entry name" value="Gamma-tubulin complex component"/>
    <property type="match status" value="1"/>
</dbReference>
<dbReference type="Gene3D" id="1.20.120.1900">
    <property type="entry name" value="Gamma-tubulin complex, C-terminal domain"/>
    <property type="match status" value="1"/>
</dbReference>
<dbReference type="InterPro" id="IPR007259">
    <property type="entry name" value="GCP"/>
</dbReference>
<dbReference type="InterPro" id="IPR040457">
    <property type="entry name" value="GCP_C"/>
</dbReference>
<dbReference type="InterPro" id="IPR042241">
    <property type="entry name" value="GCP_C_sf"/>
</dbReference>
<dbReference type="InterPro" id="IPR041470">
    <property type="entry name" value="GCP_N"/>
</dbReference>
<dbReference type="PANTHER" id="PTHR19302">
    <property type="entry name" value="GAMMA TUBULIN COMPLEX PROTEIN"/>
    <property type="match status" value="1"/>
</dbReference>
<dbReference type="PANTHER" id="PTHR19302:SF27">
    <property type="entry name" value="GAMMA-TUBULIN COMPLEX COMPONENT 4"/>
    <property type="match status" value="1"/>
</dbReference>
<dbReference type="Pfam" id="PF04130">
    <property type="entry name" value="GCP_C_terminal"/>
    <property type="match status" value="1"/>
</dbReference>
<dbReference type="Pfam" id="PF17681">
    <property type="entry name" value="GCP_N_terminal"/>
    <property type="match status" value="1"/>
</dbReference>
<name>GCP4_MOUSE</name>
<accession>Q9D4F8</accession>